<feature type="chain" id="PRO_0000231028" description="Annexin A8">
    <location>
        <begin position="1"/>
        <end position="327"/>
    </location>
</feature>
<feature type="repeat" description="Annexin 1" evidence="2">
    <location>
        <begin position="21"/>
        <end position="92"/>
    </location>
</feature>
<feature type="repeat" description="Annexin 2" evidence="2">
    <location>
        <begin position="93"/>
        <end position="164"/>
    </location>
</feature>
<feature type="repeat" description="Annexin 3" evidence="2">
    <location>
        <begin position="177"/>
        <end position="249"/>
    </location>
</feature>
<feature type="repeat" description="Annexin 4" evidence="2">
    <location>
        <begin position="253"/>
        <end position="324"/>
    </location>
</feature>
<feature type="binding site" evidence="1">
    <location>
        <position position="266"/>
    </location>
    <ligand>
        <name>Ca(2+)</name>
        <dbReference type="ChEBI" id="CHEBI:29108"/>
    </ligand>
</feature>
<feature type="binding site" evidence="1">
    <location>
        <position position="268"/>
    </location>
    <ligand>
        <name>Ca(2+)</name>
        <dbReference type="ChEBI" id="CHEBI:29108"/>
    </ligand>
</feature>
<feature type="binding site" evidence="1">
    <location>
        <position position="270"/>
    </location>
    <ligand>
        <name>Ca(2+)</name>
        <dbReference type="ChEBI" id="CHEBI:29108"/>
    </ligand>
</feature>
<feature type="binding site" evidence="1">
    <location>
        <position position="310"/>
    </location>
    <ligand>
        <name>Ca(2+)</name>
        <dbReference type="ChEBI" id="CHEBI:29108"/>
    </ligand>
</feature>
<organism>
    <name type="scientific">Bos taurus</name>
    <name type="common">Bovine</name>
    <dbReference type="NCBI Taxonomy" id="9913"/>
    <lineage>
        <taxon>Eukaryota</taxon>
        <taxon>Metazoa</taxon>
        <taxon>Chordata</taxon>
        <taxon>Craniata</taxon>
        <taxon>Vertebrata</taxon>
        <taxon>Euteleostomi</taxon>
        <taxon>Mammalia</taxon>
        <taxon>Eutheria</taxon>
        <taxon>Laurasiatheria</taxon>
        <taxon>Artiodactyla</taxon>
        <taxon>Ruminantia</taxon>
        <taxon>Pecora</taxon>
        <taxon>Bovidae</taxon>
        <taxon>Bovinae</taxon>
        <taxon>Bos</taxon>
    </lineage>
</organism>
<proteinExistence type="evidence at transcript level"/>
<reference key="1">
    <citation type="submission" date="2001-09" db="EMBL/GenBank/DDBJ databases">
        <authorList>
            <person name="White A.H."/>
            <person name="Wallis G.A."/>
        </authorList>
    </citation>
    <scope>NUCLEOTIDE SEQUENCE [MRNA]</scope>
</reference>
<reference key="2">
    <citation type="journal article" date="2005" name="BMC Genomics">
        <title>Characterization of 954 bovine full-CDS cDNA sequences.</title>
        <authorList>
            <person name="Harhay G.P."/>
            <person name="Sonstegard T.S."/>
            <person name="Keele J.W."/>
            <person name="Heaton M.P."/>
            <person name="Clawson M.L."/>
            <person name="Snelling W.M."/>
            <person name="Wiedmann R.T."/>
            <person name="Van Tassell C.P."/>
            <person name="Smith T.P.L."/>
        </authorList>
    </citation>
    <scope>NUCLEOTIDE SEQUENCE [LARGE SCALE MRNA]</scope>
</reference>
<reference key="3">
    <citation type="submission" date="2006-02" db="EMBL/GenBank/DDBJ databases">
        <authorList>
            <consortium name="NIH - Mammalian Gene Collection (MGC) project"/>
        </authorList>
    </citation>
    <scope>NUCLEOTIDE SEQUENCE [LARGE SCALE MRNA]</scope>
    <source>
        <strain>Hereford</strain>
        <tissue>Uterus</tissue>
    </source>
</reference>
<evidence type="ECO:0000250" key="1"/>
<evidence type="ECO:0000255" key="2">
    <source>
        <dbReference type="PROSITE-ProRule" id="PRU01245"/>
    </source>
</evidence>
<evidence type="ECO:0000305" key="3"/>
<comment type="function">
    <text evidence="1">This protein is an anticoagulant protein that acts as an indirect inhibitor of the thromboplastin-specific complex, which is involved in the blood coagulation cascade.</text>
</comment>
<comment type="domain">
    <text evidence="1">A pair of annexin repeats may form one binding site for calcium and phospholipid.</text>
</comment>
<comment type="similarity">
    <text evidence="2 3">Belongs to the annexin family.</text>
</comment>
<gene>
    <name type="primary">ANXA8</name>
</gene>
<name>ANXA8_BOVIN</name>
<dbReference type="EMBL" id="AF417637">
    <property type="protein sequence ID" value="AAL13308.1"/>
    <property type="molecule type" value="mRNA"/>
</dbReference>
<dbReference type="EMBL" id="BT021645">
    <property type="protein sequence ID" value="AAX46492.1"/>
    <property type="molecule type" value="mRNA"/>
</dbReference>
<dbReference type="EMBL" id="BT021646">
    <property type="protein sequence ID" value="AAX46493.1"/>
    <property type="molecule type" value="mRNA"/>
</dbReference>
<dbReference type="EMBL" id="BC113321">
    <property type="protein sequence ID" value="AAI13322.1"/>
    <property type="molecule type" value="mRNA"/>
</dbReference>
<dbReference type="RefSeq" id="NP_776666.1">
    <property type="nucleotide sequence ID" value="NM_174241.2"/>
</dbReference>
<dbReference type="RefSeq" id="XP_005226585.1">
    <property type="nucleotide sequence ID" value="XM_005226528.3"/>
</dbReference>
<dbReference type="SMR" id="Q95L54"/>
<dbReference type="FunCoup" id="Q95L54">
    <property type="interactions" value="24"/>
</dbReference>
<dbReference type="STRING" id="9913.ENSBTAP00000073504"/>
<dbReference type="PaxDb" id="9913-ENSBTAP00000043804"/>
<dbReference type="PeptideAtlas" id="Q95L54"/>
<dbReference type="Ensembl" id="ENSBTAT00000046510.4">
    <property type="protein sequence ID" value="ENSBTAP00000043804.2"/>
    <property type="gene ID" value="ENSBTAG00000018499.6"/>
</dbReference>
<dbReference type="GeneID" id="281627"/>
<dbReference type="KEGG" id="bta:281627"/>
<dbReference type="CTD" id="728113"/>
<dbReference type="VEuPathDB" id="HostDB:ENSBTAG00000018499"/>
<dbReference type="eggNOG" id="KOG0819">
    <property type="taxonomic scope" value="Eukaryota"/>
</dbReference>
<dbReference type="GeneTree" id="ENSGT00940000161044"/>
<dbReference type="HOGENOM" id="CLU_025300_0_0_1"/>
<dbReference type="InParanoid" id="Q95L54"/>
<dbReference type="OMA" id="CYVEHDV"/>
<dbReference type="OrthoDB" id="37886at2759"/>
<dbReference type="TreeFam" id="TF105452"/>
<dbReference type="Proteomes" id="UP000009136">
    <property type="component" value="Chromosome 28"/>
</dbReference>
<dbReference type="Bgee" id="ENSBTAG00000018499">
    <property type="expression patterns" value="Expressed in oviduct epithelium and 98 other cell types or tissues"/>
</dbReference>
<dbReference type="GO" id="GO:0005737">
    <property type="term" value="C:cytoplasm"/>
    <property type="evidence" value="ECO:0000318"/>
    <property type="project" value="GO_Central"/>
</dbReference>
<dbReference type="GO" id="GO:0042383">
    <property type="term" value="C:sarcolemma"/>
    <property type="evidence" value="ECO:0000318"/>
    <property type="project" value="GO_Central"/>
</dbReference>
<dbReference type="GO" id="GO:0012506">
    <property type="term" value="C:vesicle membrane"/>
    <property type="evidence" value="ECO:0000318"/>
    <property type="project" value="GO_Central"/>
</dbReference>
<dbReference type="GO" id="GO:0005509">
    <property type="term" value="F:calcium ion binding"/>
    <property type="evidence" value="ECO:0007669"/>
    <property type="project" value="InterPro"/>
</dbReference>
<dbReference type="GO" id="GO:0005544">
    <property type="term" value="F:calcium-dependent phospholipid binding"/>
    <property type="evidence" value="ECO:0000318"/>
    <property type="project" value="GO_Central"/>
</dbReference>
<dbReference type="GO" id="GO:0001786">
    <property type="term" value="F:phosphatidylserine binding"/>
    <property type="evidence" value="ECO:0000318"/>
    <property type="project" value="GO_Central"/>
</dbReference>
<dbReference type="GO" id="GO:0007596">
    <property type="term" value="P:blood coagulation"/>
    <property type="evidence" value="ECO:0007669"/>
    <property type="project" value="UniProtKB-KW"/>
</dbReference>
<dbReference type="GO" id="GO:0016197">
    <property type="term" value="P:endosomal transport"/>
    <property type="evidence" value="ECO:0000318"/>
    <property type="project" value="GO_Central"/>
</dbReference>
<dbReference type="GO" id="GO:0007032">
    <property type="term" value="P:endosome organization"/>
    <property type="evidence" value="ECO:0000318"/>
    <property type="project" value="GO_Central"/>
</dbReference>
<dbReference type="FunFam" id="1.10.220.10:FF:000001">
    <property type="entry name" value="Annexin"/>
    <property type="match status" value="1"/>
</dbReference>
<dbReference type="FunFam" id="1.10.220.10:FF:000002">
    <property type="entry name" value="Annexin"/>
    <property type="match status" value="1"/>
</dbReference>
<dbReference type="FunFam" id="1.10.220.10:FF:000003">
    <property type="entry name" value="Annexin"/>
    <property type="match status" value="1"/>
</dbReference>
<dbReference type="FunFam" id="1.10.220.10:FF:000004">
    <property type="entry name" value="Annexin"/>
    <property type="match status" value="1"/>
</dbReference>
<dbReference type="Gene3D" id="1.10.220.10">
    <property type="entry name" value="Annexin"/>
    <property type="match status" value="4"/>
</dbReference>
<dbReference type="InterPro" id="IPR001464">
    <property type="entry name" value="Annexin"/>
</dbReference>
<dbReference type="InterPro" id="IPR018502">
    <property type="entry name" value="Annexin_repeat"/>
</dbReference>
<dbReference type="InterPro" id="IPR018252">
    <property type="entry name" value="Annexin_repeat_CS"/>
</dbReference>
<dbReference type="InterPro" id="IPR037104">
    <property type="entry name" value="Annexin_sf"/>
</dbReference>
<dbReference type="InterPro" id="IPR009115">
    <property type="entry name" value="ANX8"/>
</dbReference>
<dbReference type="PANTHER" id="PTHR10502">
    <property type="entry name" value="ANNEXIN"/>
    <property type="match status" value="1"/>
</dbReference>
<dbReference type="PANTHER" id="PTHR10502:SF133">
    <property type="entry name" value="ANNEXIN A8-RELATED"/>
    <property type="match status" value="1"/>
</dbReference>
<dbReference type="Pfam" id="PF00191">
    <property type="entry name" value="Annexin"/>
    <property type="match status" value="4"/>
</dbReference>
<dbReference type="PRINTS" id="PR00196">
    <property type="entry name" value="ANNEXIN"/>
</dbReference>
<dbReference type="PRINTS" id="PR01808">
    <property type="entry name" value="ANNEXINVIII"/>
</dbReference>
<dbReference type="SMART" id="SM00335">
    <property type="entry name" value="ANX"/>
    <property type="match status" value="4"/>
</dbReference>
<dbReference type="SUPFAM" id="SSF47874">
    <property type="entry name" value="Annexin"/>
    <property type="match status" value="1"/>
</dbReference>
<dbReference type="PROSITE" id="PS00223">
    <property type="entry name" value="ANNEXIN_1"/>
    <property type="match status" value="4"/>
</dbReference>
<dbReference type="PROSITE" id="PS51897">
    <property type="entry name" value="ANNEXIN_2"/>
    <property type="match status" value="4"/>
</dbReference>
<protein>
    <recommendedName>
        <fullName>Annexin A8</fullName>
    </recommendedName>
    <alternativeName>
        <fullName>Annexin VIII</fullName>
    </alternativeName>
    <alternativeName>
        <fullName>Annexin-8</fullName>
    </alternativeName>
</protein>
<accession>Q95L54</accession>
<keyword id="KW-0041">Annexin</keyword>
<keyword id="KW-0094">Blood coagulation</keyword>
<keyword id="KW-0106">Calcium</keyword>
<keyword id="KW-0111">Calcium/phospholipid-binding</keyword>
<keyword id="KW-0356">Hemostasis</keyword>
<keyword id="KW-0479">Metal-binding</keyword>
<keyword id="KW-1185">Reference proteome</keyword>
<keyword id="KW-0677">Repeat</keyword>
<sequence>MAWWKAWVEQEGVSVKGSPHFNPDPDAETLYKAMKGIGTNEQAIIDVLTKRSNAQRQQIAKSFKAQFGKDLIETLKSELSGKFERLIIALMYPPYRYEAKELYDAMKGIGTKEGVIIEILASRTKNQLQEIMKAYEEDYGSNLEEDIKADTSGYLERILVCLLQGSRDDLSGYVDPGLALQDAQDLYAAGEKICGTDEMKFITILCTRSATHLMRVFEEYEKIANKSIEDSIKSETHGSLEEAMLTVVKCTRNLHGYFAERLYFAMKGAGTLDGTLIRNIVSRSEIDLNLIKNQFKKMYGKTLSSMIMEDTSGDYKNALLNLVGSDL</sequence>